<protein>
    <recommendedName>
        <fullName>Prostaglandin reductase 2</fullName>
        <shortName>PRG-2</shortName>
        <ecNumber>1.3.1.48</ecNumber>
    </recommendedName>
    <alternativeName>
        <fullName>15-oxoprostaglandin 13-reductase</fullName>
    </alternativeName>
</protein>
<comment type="function">
    <text evidence="2">Functions as 15-oxo-prostaglandin 13-reductase and acts on 15-keto-PGE1, 15-keto-PGE2, 15-keto-PGE1-alpha and 15-keto-PGE2-alpha with highest activity towards 15-keto-PGE2. Overexpression represses transcriptional activity of PPARG and inhibits adipocyte differentiation.</text>
</comment>
<comment type="catalytic activity">
    <reaction evidence="2">
        <text>13,14-dihydro-15-oxo-prostaglandin E2 + NAD(+) = 15-oxoprostaglandin E2 + NADH + H(+)</text>
        <dbReference type="Rhea" id="RHEA:11916"/>
        <dbReference type="ChEBI" id="CHEBI:15378"/>
        <dbReference type="ChEBI" id="CHEBI:57400"/>
        <dbReference type="ChEBI" id="CHEBI:57402"/>
        <dbReference type="ChEBI" id="CHEBI:57540"/>
        <dbReference type="ChEBI" id="CHEBI:57945"/>
        <dbReference type="EC" id="1.3.1.48"/>
    </reaction>
    <physiologicalReaction direction="right-to-left" evidence="2">
        <dbReference type="Rhea" id="RHEA:11918"/>
    </physiologicalReaction>
</comment>
<comment type="catalytic activity">
    <reaction evidence="2">
        <text>13,14-dihydro-15-oxo-prostaglandin E2 + NADP(+) = 15-oxoprostaglandin E2 + NADPH + H(+)</text>
        <dbReference type="Rhea" id="RHEA:11912"/>
        <dbReference type="ChEBI" id="CHEBI:15378"/>
        <dbReference type="ChEBI" id="CHEBI:57400"/>
        <dbReference type="ChEBI" id="CHEBI:57402"/>
        <dbReference type="ChEBI" id="CHEBI:57783"/>
        <dbReference type="ChEBI" id="CHEBI:58349"/>
        <dbReference type="EC" id="1.3.1.48"/>
    </reaction>
    <physiologicalReaction direction="right-to-left" evidence="2">
        <dbReference type="Rhea" id="RHEA:11914"/>
    </physiologicalReaction>
</comment>
<comment type="catalytic activity">
    <reaction evidence="2">
        <text>13,14-dihydro-15-oxo-PGF2alpha + NADP(+) = 15-oxoprostaglandin F2alpha + NADPH + H(+)</text>
        <dbReference type="Rhea" id="RHEA:50588"/>
        <dbReference type="ChEBI" id="CHEBI:15378"/>
        <dbReference type="ChEBI" id="CHEBI:57783"/>
        <dbReference type="ChEBI" id="CHEBI:58349"/>
        <dbReference type="ChEBI" id="CHEBI:133374"/>
        <dbReference type="ChEBI" id="CHEBI:133409"/>
    </reaction>
    <physiologicalReaction direction="right-to-left" evidence="2">
        <dbReference type="Rhea" id="RHEA:50590"/>
    </physiologicalReaction>
</comment>
<comment type="catalytic activity">
    <reaction evidence="2">
        <text>13,14-dihydro-15-oxo-prostaglandin E1 + NADP(+) = 15-oxoprostaglandin E1 + NADPH + H(+)</text>
        <dbReference type="Rhea" id="RHEA:50584"/>
        <dbReference type="ChEBI" id="CHEBI:15378"/>
        <dbReference type="ChEBI" id="CHEBI:57401"/>
        <dbReference type="ChEBI" id="CHEBI:57783"/>
        <dbReference type="ChEBI" id="CHEBI:58349"/>
        <dbReference type="ChEBI" id="CHEBI:133408"/>
    </reaction>
    <physiologicalReaction direction="right-to-left" evidence="2">
        <dbReference type="Rhea" id="RHEA:50586"/>
    </physiologicalReaction>
</comment>
<comment type="catalytic activity">
    <reaction evidence="2">
        <text>13,14-dihydro-15-oxo-prostaglandin F1alpha + NADP(+) = 15-oxoprostaglandin F1alpha + NADPH + H(+)</text>
        <dbReference type="Rhea" id="RHEA:50592"/>
        <dbReference type="ChEBI" id="CHEBI:15378"/>
        <dbReference type="ChEBI" id="CHEBI:57783"/>
        <dbReference type="ChEBI" id="CHEBI:58349"/>
        <dbReference type="ChEBI" id="CHEBI:79072"/>
        <dbReference type="ChEBI" id="CHEBI:133411"/>
    </reaction>
    <physiologicalReaction direction="right-to-left" evidence="2">
        <dbReference type="Rhea" id="RHEA:50594"/>
    </physiologicalReaction>
</comment>
<comment type="subunit">
    <text evidence="1">Monomer.</text>
</comment>
<comment type="subcellular location">
    <subcellularLocation>
        <location evidence="1">Cytoplasm</location>
    </subcellularLocation>
</comment>
<comment type="similarity">
    <text evidence="3">Belongs to the NADP-dependent oxidoreductase L4BD family.</text>
</comment>
<reference key="1">
    <citation type="submission" date="2005-11" db="EMBL/GenBank/DDBJ databases">
        <authorList>
            <consortium name="NIH - Mammalian Gene Collection (MGC) project"/>
        </authorList>
    </citation>
    <scope>NUCLEOTIDE SEQUENCE [LARGE SCALE MRNA]</scope>
    <source>
        <strain>Crossbred X Angus</strain>
        <tissue>Liver</tissue>
    </source>
</reference>
<sequence length="351" mass="38400">MIVQRVVLNSRPGKNGHPVAENFRVEEVNLPDCVNEGQVQVRTLYLSVDPYMRCRMNEDTGSDYITPWQLSQVVDGGGVGIIEESKHTNFMKGDFVTSFYWPWQTKVILDGNILEKVDPQLVDGHLSYFLGAIGMPGLTSLIGVQEKGHITAGSNQTMVVSGAAGACGSLAGQIGRLLGCSRVVGICGTPEKCLFLTSELGFDAAINYKEGNVAEQLHKLCPAGVDVYFDNVGGDISDTVISQMNQNSHIILCGQISQYNKDVPYPPPLPPAIEAIQKERNITRERFLVLNYKDKFEFGILQLSQWFKEGKLKIKETMINGLENMGAAFQSMMTGGNIGKQIVCISGDTSL</sequence>
<name>PTGR2_BOVIN</name>
<gene>
    <name type="primary">PTGR2</name>
</gene>
<feature type="chain" id="PRO_0000285789" description="Prostaglandin reductase 2">
    <location>
        <begin position="1"/>
        <end position="351"/>
    </location>
</feature>
<feature type="binding site" evidence="1">
    <location>
        <begin position="99"/>
        <end position="100"/>
    </location>
    <ligand>
        <name>substrate</name>
    </ligand>
</feature>
<feature type="binding site" evidence="1">
    <location>
        <begin position="165"/>
        <end position="168"/>
    </location>
    <ligand>
        <name>NADP(+)</name>
        <dbReference type="ChEBI" id="CHEBI:58349"/>
    </ligand>
</feature>
<feature type="binding site" evidence="1">
    <location>
        <position position="192"/>
    </location>
    <ligand>
        <name>NADP(+)</name>
        <dbReference type="ChEBI" id="CHEBI:58349"/>
    </ligand>
</feature>
<feature type="binding site" evidence="1">
    <location>
        <position position="208"/>
    </location>
    <ligand>
        <name>NADP(+)</name>
        <dbReference type="ChEBI" id="CHEBI:58349"/>
    </ligand>
</feature>
<feature type="binding site" evidence="1">
    <location>
        <position position="231"/>
    </location>
    <ligand>
        <name>NADP(+)</name>
        <dbReference type="ChEBI" id="CHEBI:58349"/>
    </ligand>
</feature>
<feature type="binding site" evidence="1">
    <location>
        <begin position="253"/>
        <end position="259"/>
    </location>
    <ligand>
        <name>NADP(+)</name>
        <dbReference type="ChEBI" id="CHEBI:58349"/>
    </ligand>
</feature>
<feature type="binding site" evidence="1">
    <location>
        <begin position="287"/>
        <end position="289"/>
    </location>
    <ligand>
        <name>NADP(+)</name>
        <dbReference type="ChEBI" id="CHEBI:58349"/>
    </ligand>
</feature>
<feature type="binding site" evidence="1">
    <location>
        <begin position="288"/>
        <end position="290"/>
    </location>
    <ligand>
        <name>substrate</name>
    </ligand>
</feature>
<feature type="binding site" evidence="1">
    <location>
        <position position="337"/>
    </location>
    <ligand>
        <name>NADP(+)</name>
        <dbReference type="ChEBI" id="CHEBI:58349"/>
    </ligand>
</feature>
<keyword id="KW-0963">Cytoplasm</keyword>
<keyword id="KW-0443">Lipid metabolism</keyword>
<keyword id="KW-0521">NADP</keyword>
<keyword id="KW-0560">Oxidoreductase</keyword>
<keyword id="KW-1185">Reference proteome</keyword>
<evidence type="ECO:0000250" key="1"/>
<evidence type="ECO:0000250" key="2">
    <source>
        <dbReference type="UniProtKB" id="Q8VDQ1"/>
    </source>
</evidence>
<evidence type="ECO:0000305" key="3"/>
<dbReference type="EC" id="1.3.1.48"/>
<dbReference type="EMBL" id="BC109688">
    <property type="protein sequence ID" value="AAI09689.1"/>
    <property type="molecule type" value="mRNA"/>
</dbReference>
<dbReference type="RefSeq" id="NP_001068717.1">
    <property type="nucleotide sequence ID" value="NM_001075249.2"/>
</dbReference>
<dbReference type="RefSeq" id="XP_005212001.1">
    <property type="nucleotide sequence ID" value="XM_005211944.3"/>
</dbReference>
<dbReference type="RefSeq" id="XP_015328711.1">
    <property type="nucleotide sequence ID" value="XM_015473225.3"/>
</dbReference>
<dbReference type="RefSeq" id="XP_015328712.1">
    <property type="nucleotide sequence ID" value="XM_015473226.3"/>
</dbReference>
<dbReference type="RefSeq" id="XP_059746251.1">
    <property type="nucleotide sequence ID" value="XM_059890268.1"/>
</dbReference>
<dbReference type="SMR" id="Q32L99"/>
<dbReference type="FunCoup" id="Q32L99">
    <property type="interactions" value="1296"/>
</dbReference>
<dbReference type="STRING" id="9913.ENSBTAP00000004878"/>
<dbReference type="PaxDb" id="9913-ENSBTAP00000004878"/>
<dbReference type="PeptideAtlas" id="Q32L99"/>
<dbReference type="Ensembl" id="ENSBTAT00000004878.5">
    <property type="protein sequence ID" value="ENSBTAP00000004878.3"/>
    <property type="gene ID" value="ENSBTAG00000003747.7"/>
</dbReference>
<dbReference type="GeneID" id="506263"/>
<dbReference type="KEGG" id="bta:506263"/>
<dbReference type="CTD" id="145482"/>
<dbReference type="VEuPathDB" id="HostDB:ENSBTAG00000003747"/>
<dbReference type="eggNOG" id="KOG1196">
    <property type="taxonomic scope" value="Eukaryota"/>
</dbReference>
<dbReference type="GeneTree" id="ENSGT00940000156793"/>
<dbReference type="HOGENOM" id="CLU_026673_29_2_1"/>
<dbReference type="InParanoid" id="Q32L99"/>
<dbReference type="OMA" id="EEKCRYA"/>
<dbReference type="OrthoDB" id="809632at2759"/>
<dbReference type="TreeFam" id="TF324201"/>
<dbReference type="Proteomes" id="UP000009136">
    <property type="component" value="Chromosome 10"/>
</dbReference>
<dbReference type="Bgee" id="ENSBTAG00000003747">
    <property type="expression patterns" value="Expressed in caput epididymis and 107 other cell types or tissues"/>
</dbReference>
<dbReference type="GO" id="GO:0005737">
    <property type="term" value="C:cytoplasm"/>
    <property type="evidence" value="ECO:0007669"/>
    <property type="project" value="UniProtKB-SubCell"/>
</dbReference>
<dbReference type="GO" id="GO:0047522">
    <property type="term" value="F:15-oxoprostaglandin 13-oxidase [NAD(P)+] activity"/>
    <property type="evidence" value="ECO:0000250"/>
    <property type="project" value="UniProtKB"/>
</dbReference>
<dbReference type="GO" id="GO:0006693">
    <property type="term" value="P:prostaglandin metabolic process"/>
    <property type="evidence" value="ECO:0000250"/>
    <property type="project" value="UniProtKB"/>
</dbReference>
<dbReference type="CDD" id="cd08293">
    <property type="entry name" value="PTGR2"/>
    <property type="match status" value="1"/>
</dbReference>
<dbReference type="FunFam" id="3.40.50.720:FF:000121">
    <property type="entry name" value="Prostaglandin reductase 2"/>
    <property type="match status" value="1"/>
</dbReference>
<dbReference type="FunFam" id="3.90.180.10:FF:000019">
    <property type="entry name" value="Prostaglandin reductase 2"/>
    <property type="match status" value="1"/>
</dbReference>
<dbReference type="Gene3D" id="3.90.180.10">
    <property type="entry name" value="Medium-chain alcohol dehydrogenases, catalytic domain"/>
    <property type="match status" value="1"/>
</dbReference>
<dbReference type="Gene3D" id="3.40.50.720">
    <property type="entry name" value="NAD(P)-binding Rossmann-like Domain"/>
    <property type="match status" value="1"/>
</dbReference>
<dbReference type="InterPro" id="IPR013149">
    <property type="entry name" value="ADH-like_C"/>
</dbReference>
<dbReference type="InterPro" id="IPR041694">
    <property type="entry name" value="ADH_N_2"/>
</dbReference>
<dbReference type="InterPro" id="IPR011032">
    <property type="entry name" value="GroES-like_sf"/>
</dbReference>
<dbReference type="InterPro" id="IPR045010">
    <property type="entry name" value="MDR_fam"/>
</dbReference>
<dbReference type="InterPro" id="IPR036291">
    <property type="entry name" value="NAD(P)-bd_dom_sf"/>
</dbReference>
<dbReference type="InterPro" id="IPR037399">
    <property type="entry name" value="PTGR2"/>
</dbReference>
<dbReference type="PANTHER" id="PTHR43205">
    <property type="entry name" value="PROSTAGLANDIN REDUCTASE"/>
    <property type="match status" value="1"/>
</dbReference>
<dbReference type="PANTHER" id="PTHR43205:SF5">
    <property type="entry name" value="PROSTAGLANDIN REDUCTASE 2"/>
    <property type="match status" value="1"/>
</dbReference>
<dbReference type="Pfam" id="PF16884">
    <property type="entry name" value="ADH_N_2"/>
    <property type="match status" value="1"/>
</dbReference>
<dbReference type="Pfam" id="PF00107">
    <property type="entry name" value="ADH_zinc_N"/>
    <property type="match status" value="1"/>
</dbReference>
<dbReference type="SUPFAM" id="SSF50129">
    <property type="entry name" value="GroES-like"/>
    <property type="match status" value="1"/>
</dbReference>
<dbReference type="SUPFAM" id="SSF51735">
    <property type="entry name" value="NAD(P)-binding Rossmann-fold domains"/>
    <property type="match status" value="1"/>
</dbReference>
<proteinExistence type="evidence at transcript level"/>
<accession>Q32L99</accession>
<organism>
    <name type="scientific">Bos taurus</name>
    <name type="common">Bovine</name>
    <dbReference type="NCBI Taxonomy" id="9913"/>
    <lineage>
        <taxon>Eukaryota</taxon>
        <taxon>Metazoa</taxon>
        <taxon>Chordata</taxon>
        <taxon>Craniata</taxon>
        <taxon>Vertebrata</taxon>
        <taxon>Euteleostomi</taxon>
        <taxon>Mammalia</taxon>
        <taxon>Eutheria</taxon>
        <taxon>Laurasiatheria</taxon>
        <taxon>Artiodactyla</taxon>
        <taxon>Ruminantia</taxon>
        <taxon>Pecora</taxon>
        <taxon>Bovidae</taxon>
        <taxon>Bovinae</taxon>
        <taxon>Bos</taxon>
    </lineage>
</organism>